<feature type="chain" id="PRO_0000091151" description="Elongation factor G 1">
    <location>
        <begin position="1"/>
        <end position="694"/>
    </location>
</feature>
<feature type="domain" description="tr-type G">
    <location>
        <begin position="5"/>
        <end position="280"/>
    </location>
</feature>
<feature type="binding site" evidence="1">
    <location>
        <begin position="14"/>
        <end position="21"/>
    </location>
    <ligand>
        <name>GTP</name>
        <dbReference type="ChEBI" id="CHEBI:37565"/>
    </ligand>
</feature>
<feature type="binding site" evidence="1">
    <location>
        <begin position="78"/>
        <end position="82"/>
    </location>
    <ligand>
        <name>GTP</name>
        <dbReference type="ChEBI" id="CHEBI:37565"/>
    </ligand>
</feature>
<feature type="binding site" evidence="1">
    <location>
        <begin position="132"/>
        <end position="135"/>
    </location>
    <ligand>
        <name>GTP</name>
        <dbReference type="ChEBI" id="CHEBI:37565"/>
    </ligand>
</feature>
<protein>
    <recommendedName>
        <fullName evidence="1">Elongation factor G 1</fullName>
        <shortName evidence="1">EF-G 1</shortName>
    </recommendedName>
</protein>
<reference key="1">
    <citation type="journal article" date="2004" name="PLoS Biol.">
        <title>Genomic insights into methanotrophy: the complete genome sequence of Methylococcus capsulatus (Bath).</title>
        <authorList>
            <person name="Ward N.L."/>
            <person name="Larsen O."/>
            <person name="Sakwa J."/>
            <person name="Bruseth L."/>
            <person name="Khouri H.M."/>
            <person name="Durkin A.S."/>
            <person name="Dimitrov G."/>
            <person name="Jiang L."/>
            <person name="Scanlan D."/>
            <person name="Kang K.H."/>
            <person name="Lewis M.R."/>
            <person name="Nelson K.E."/>
            <person name="Methe B.A."/>
            <person name="Wu M."/>
            <person name="Heidelberg J.F."/>
            <person name="Paulsen I.T."/>
            <person name="Fouts D.E."/>
            <person name="Ravel J."/>
            <person name="Tettelin H."/>
            <person name="Ren Q."/>
            <person name="Read T.D."/>
            <person name="DeBoy R.T."/>
            <person name="Seshadri R."/>
            <person name="Salzberg S.L."/>
            <person name="Jensen H.B."/>
            <person name="Birkeland N.K."/>
            <person name="Nelson W.C."/>
            <person name="Dodson R.J."/>
            <person name="Grindhaug S.H."/>
            <person name="Holt I.E."/>
            <person name="Eidhammer I."/>
            <person name="Jonasen I."/>
            <person name="Vanaken S."/>
            <person name="Utterback T.R."/>
            <person name="Feldblyum T.V."/>
            <person name="Fraser C.M."/>
            <person name="Lillehaug J.R."/>
            <person name="Eisen J.A."/>
        </authorList>
    </citation>
    <scope>NUCLEOTIDE SEQUENCE [LARGE SCALE GENOMIC DNA]</scope>
    <source>
        <strain>ATCC 33009 / NCIMB 11132 / Bath</strain>
    </source>
</reference>
<dbReference type="EMBL" id="AE017282">
    <property type="protein sequence ID" value="AAU93266.1"/>
    <property type="molecule type" value="Genomic_DNA"/>
</dbReference>
<dbReference type="SMR" id="Q60BD3"/>
<dbReference type="STRING" id="243233.MCA0544"/>
<dbReference type="GeneID" id="88222876"/>
<dbReference type="KEGG" id="mca:MCA0544"/>
<dbReference type="eggNOG" id="COG0480">
    <property type="taxonomic scope" value="Bacteria"/>
</dbReference>
<dbReference type="HOGENOM" id="CLU_002794_4_1_6"/>
<dbReference type="Proteomes" id="UP000006821">
    <property type="component" value="Chromosome"/>
</dbReference>
<dbReference type="GO" id="GO:0005737">
    <property type="term" value="C:cytoplasm"/>
    <property type="evidence" value="ECO:0007669"/>
    <property type="project" value="UniProtKB-SubCell"/>
</dbReference>
<dbReference type="GO" id="GO:0005525">
    <property type="term" value="F:GTP binding"/>
    <property type="evidence" value="ECO:0007669"/>
    <property type="project" value="UniProtKB-UniRule"/>
</dbReference>
<dbReference type="GO" id="GO:0003924">
    <property type="term" value="F:GTPase activity"/>
    <property type="evidence" value="ECO:0007669"/>
    <property type="project" value="InterPro"/>
</dbReference>
<dbReference type="GO" id="GO:0097216">
    <property type="term" value="F:guanosine tetraphosphate binding"/>
    <property type="evidence" value="ECO:0007669"/>
    <property type="project" value="UniProtKB-ARBA"/>
</dbReference>
<dbReference type="GO" id="GO:0003746">
    <property type="term" value="F:translation elongation factor activity"/>
    <property type="evidence" value="ECO:0007669"/>
    <property type="project" value="UniProtKB-UniRule"/>
</dbReference>
<dbReference type="GO" id="GO:0032790">
    <property type="term" value="P:ribosome disassembly"/>
    <property type="evidence" value="ECO:0007669"/>
    <property type="project" value="TreeGrafter"/>
</dbReference>
<dbReference type="CDD" id="cd01886">
    <property type="entry name" value="EF-G"/>
    <property type="match status" value="1"/>
</dbReference>
<dbReference type="CDD" id="cd16262">
    <property type="entry name" value="EFG_III"/>
    <property type="match status" value="1"/>
</dbReference>
<dbReference type="CDD" id="cd01434">
    <property type="entry name" value="EFG_mtEFG1_IV"/>
    <property type="match status" value="1"/>
</dbReference>
<dbReference type="CDD" id="cd03713">
    <property type="entry name" value="EFG_mtEFG_C"/>
    <property type="match status" value="1"/>
</dbReference>
<dbReference type="CDD" id="cd04088">
    <property type="entry name" value="EFG_mtEFG_II"/>
    <property type="match status" value="1"/>
</dbReference>
<dbReference type="FunFam" id="2.40.30.10:FF:000006">
    <property type="entry name" value="Elongation factor G"/>
    <property type="match status" value="1"/>
</dbReference>
<dbReference type="FunFam" id="3.30.230.10:FF:000003">
    <property type="entry name" value="Elongation factor G"/>
    <property type="match status" value="1"/>
</dbReference>
<dbReference type="FunFam" id="3.30.70.240:FF:000001">
    <property type="entry name" value="Elongation factor G"/>
    <property type="match status" value="1"/>
</dbReference>
<dbReference type="FunFam" id="3.30.70.870:FF:000001">
    <property type="entry name" value="Elongation factor G"/>
    <property type="match status" value="1"/>
</dbReference>
<dbReference type="FunFam" id="3.40.50.300:FF:000029">
    <property type="entry name" value="Elongation factor G"/>
    <property type="match status" value="1"/>
</dbReference>
<dbReference type="Gene3D" id="3.30.230.10">
    <property type="match status" value="1"/>
</dbReference>
<dbReference type="Gene3D" id="3.30.70.240">
    <property type="match status" value="1"/>
</dbReference>
<dbReference type="Gene3D" id="3.30.70.870">
    <property type="entry name" value="Elongation Factor G (Translational Gtpase), domain 3"/>
    <property type="match status" value="1"/>
</dbReference>
<dbReference type="Gene3D" id="3.40.50.300">
    <property type="entry name" value="P-loop containing nucleotide triphosphate hydrolases"/>
    <property type="match status" value="1"/>
</dbReference>
<dbReference type="Gene3D" id="2.40.30.10">
    <property type="entry name" value="Translation factors"/>
    <property type="match status" value="1"/>
</dbReference>
<dbReference type="HAMAP" id="MF_00054_B">
    <property type="entry name" value="EF_G_EF_2_B"/>
    <property type="match status" value="1"/>
</dbReference>
<dbReference type="InterPro" id="IPR041095">
    <property type="entry name" value="EFG_II"/>
</dbReference>
<dbReference type="InterPro" id="IPR009022">
    <property type="entry name" value="EFG_III"/>
</dbReference>
<dbReference type="InterPro" id="IPR035647">
    <property type="entry name" value="EFG_III/V"/>
</dbReference>
<dbReference type="InterPro" id="IPR047872">
    <property type="entry name" value="EFG_IV"/>
</dbReference>
<dbReference type="InterPro" id="IPR035649">
    <property type="entry name" value="EFG_V"/>
</dbReference>
<dbReference type="InterPro" id="IPR000640">
    <property type="entry name" value="EFG_V-like"/>
</dbReference>
<dbReference type="InterPro" id="IPR004161">
    <property type="entry name" value="EFTu-like_2"/>
</dbReference>
<dbReference type="InterPro" id="IPR031157">
    <property type="entry name" value="G_TR_CS"/>
</dbReference>
<dbReference type="InterPro" id="IPR027417">
    <property type="entry name" value="P-loop_NTPase"/>
</dbReference>
<dbReference type="InterPro" id="IPR020568">
    <property type="entry name" value="Ribosomal_Su5_D2-typ_SF"/>
</dbReference>
<dbReference type="InterPro" id="IPR014721">
    <property type="entry name" value="Ribsml_uS5_D2-typ_fold_subgr"/>
</dbReference>
<dbReference type="InterPro" id="IPR005225">
    <property type="entry name" value="Small_GTP-bd"/>
</dbReference>
<dbReference type="InterPro" id="IPR000795">
    <property type="entry name" value="T_Tr_GTP-bd_dom"/>
</dbReference>
<dbReference type="InterPro" id="IPR009000">
    <property type="entry name" value="Transl_B-barrel_sf"/>
</dbReference>
<dbReference type="InterPro" id="IPR004540">
    <property type="entry name" value="Transl_elong_EFG/EF2"/>
</dbReference>
<dbReference type="InterPro" id="IPR005517">
    <property type="entry name" value="Transl_elong_EFG/EF2_IV"/>
</dbReference>
<dbReference type="NCBIfam" id="TIGR00484">
    <property type="entry name" value="EF-G"/>
    <property type="match status" value="1"/>
</dbReference>
<dbReference type="NCBIfam" id="NF009381">
    <property type="entry name" value="PRK12740.1-5"/>
    <property type="match status" value="1"/>
</dbReference>
<dbReference type="NCBIfam" id="TIGR00231">
    <property type="entry name" value="small_GTP"/>
    <property type="match status" value="1"/>
</dbReference>
<dbReference type="PANTHER" id="PTHR43261:SF5">
    <property type="entry name" value="ELONGATION FACTOR G 1"/>
    <property type="match status" value="1"/>
</dbReference>
<dbReference type="PANTHER" id="PTHR43261">
    <property type="entry name" value="TRANSLATION ELONGATION FACTOR G-RELATED"/>
    <property type="match status" value="1"/>
</dbReference>
<dbReference type="Pfam" id="PF00679">
    <property type="entry name" value="EFG_C"/>
    <property type="match status" value="1"/>
</dbReference>
<dbReference type="Pfam" id="PF14492">
    <property type="entry name" value="EFG_III"/>
    <property type="match status" value="1"/>
</dbReference>
<dbReference type="Pfam" id="PF03764">
    <property type="entry name" value="EFG_IV"/>
    <property type="match status" value="1"/>
</dbReference>
<dbReference type="Pfam" id="PF00009">
    <property type="entry name" value="GTP_EFTU"/>
    <property type="match status" value="1"/>
</dbReference>
<dbReference type="Pfam" id="PF03144">
    <property type="entry name" value="GTP_EFTU_D2"/>
    <property type="match status" value="1"/>
</dbReference>
<dbReference type="PRINTS" id="PR00315">
    <property type="entry name" value="ELONGATNFCT"/>
</dbReference>
<dbReference type="SMART" id="SM00838">
    <property type="entry name" value="EFG_C"/>
    <property type="match status" value="1"/>
</dbReference>
<dbReference type="SMART" id="SM00889">
    <property type="entry name" value="EFG_IV"/>
    <property type="match status" value="1"/>
</dbReference>
<dbReference type="SUPFAM" id="SSF54980">
    <property type="entry name" value="EF-G C-terminal domain-like"/>
    <property type="match status" value="2"/>
</dbReference>
<dbReference type="SUPFAM" id="SSF52540">
    <property type="entry name" value="P-loop containing nucleoside triphosphate hydrolases"/>
    <property type="match status" value="1"/>
</dbReference>
<dbReference type="SUPFAM" id="SSF54211">
    <property type="entry name" value="Ribosomal protein S5 domain 2-like"/>
    <property type="match status" value="1"/>
</dbReference>
<dbReference type="SUPFAM" id="SSF50447">
    <property type="entry name" value="Translation proteins"/>
    <property type="match status" value="1"/>
</dbReference>
<dbReference type="PROSITE" id="PS00301">
    <property type="entry name" value="G_TR_1"/>
    <property type="match status" value="1"/>
</dbReference>
<dbReference type="PROSITE" id="PS51722">
    <property type="entry name" value="G_TR_2"/>
    <property type="match status" value="1"/>
</dbReference>
<name>EFG1_METCA</name>
<evidence type="ECO:0000255" key="1">
    <source>
        <dbReference type="HAMAP-Rule" id="MF_00054"/>
    </source>
</evidence>
<accession>Q60BD3</accession>
<comment type="function">
    <text evidence="1">Catalyzes the GTP-dependent ribosomal translocation step during translation elongation. During this step, the ribosome changes from the pre-translocational (PRE) to the post-translocational (POST) state as the newly formed A-site-bound peptidyl-tRNA and P-site-bound deacylated tRNA move to the P and E sites, respectively. Catalyzes the coordinated movement of the two tRNA molecules, the mRNA and conformational changes in the ribosome.</text>
</comment>
<comment type="subcellular location">
    <subcellularLocation>
        <location evidence="1">Cytoplasm</location>
    </subcellularLocation>
</comment>
<comment type="similarity">
    <text evidence="1">Belongs to the TRAFAC class translation factor GTPase superfamily. Classic translation factor GTPase family. EF-G/EF-2 subfamily.</text>
</comment>
<gene>
    <name evidence="1" type="primary">fusA1</name>
    <name type="synonym">fusA-1</name>
    <name type="ordered locus">MCA0544</name>
</gene>
<proteinExistence type="inferred from homology"/>
<keyword id="KW-0963">Cytoplasm</keyword>
<keyword id="KW-0251">Elongation factor</keyword>
<keyword id="KW-0342">GTP-binding</keyword>
<keyword id="KW-0547">Nucleotide-binding</keyword>
<keyword id="KW-0648">Protein biosynthesis</keyword>
<keyword id="KW-1185">Reference proteome</keyword>
<organism>
    <name type="scientific">Methylococcus capsulatus (strain ATCC 33009 / NCIMB 11132 / Bath)</name>
    <dbReference type="NCBI Taxonomy" id="243233"/>
    <lineage>
        <taxon>Bacteria</taxon>
        <taxon>Pseudomonadati</taxon>
        <taxon>Pseudomonadota</taxon>
        <taxon>Gammaproteobacteria</taxon>
        <taxon>Methylococcales</taxon>
        <taxon>Methylococcaceae</taxon>
        <taxon>Methylococcus</taxon>
    </lineage>
</organism>
<sequence length="694" mass="77000">MTDLSRYRNIGIFAHVDAGKTTTTERILKLTGKIHKIGEVHDGAATTDFMEQEQERGITIQSAATTCFWKDHRFNIIDTPGHVDFTIEVYRSLKVLDGGIGVFCGSGGVEPQSETNWRYANDSEVARIIYVNKLDRVGADFYRVVKQIRDVLGAYPLVMTLPIGREESFIGVVELLTRKAWIWDDSGDPMKYEVKDVPAEMADEVEKWRAELVEKAVEQDDEVMEKYLEGEEPDVDTLKRLIRKGTIKLDFFPTYCGSSFKNKGVQLVLDAVVDYLPDPTEVKPQPEVDLEGHETGEFAIVDPDRPLRALAFKIMDDRYGALTFLRLYSGRLEKGTTVLNTATGKTERIGRIVEMHANQRNELDSAQAGDIVAVLGMKNVQTGHTLCDPDKPATLEPMVFPDPVISIAVTPKDKAANEKMGIALGKMVQEDPSFHVETDQESGETILKGMGELHLDIKVDILKRTHGVEVNVGKPQVAYRETITRRVEDEYVHKKQTGGSGQYAKINYVIEPGEPGSGFVFESTVTGGNVPREFWPAVEKGFRSMLGKGVLAGYPCVDFKVNLTDGGFHAVDSSAIAFEIAAQAAFRQSVPKAAPQLLEPIMKVDVFTPDAHVGDVIGDLNRRRGMIKSQEAGVTGVRIKAEVPLSEMFGYIGDLRTMTSGRGQFSMEFSHYMPCPKNVADEVIKEAQERAARK</sequence>